<reference key="1">
    <citation type="journal article" date="2008" name="J. Bacteriol.">
        <title>Genome sequence of a nephritogenic and highly transformable M49 strain of Streptococcus pyogenes.</title>
        <authorList>
            <person name="McShan W.M."/>
            <person name="Ferretti J.J."/>
            <person name="Karasawa T."/>
            <person name="Suvorov A.N."/>
            <person name="Lin S."/>
            <person name="Qin B."/>
            <person name="Jia H."/>
            <person name="Kenton S."/>
            <person name="Najar F."/>
            <person name="Wu H."/>
            <person name="Scott J."/>
            <person name="Roe B.A."/>
            <person name="Savic D.J."/>
        </authorList>
    </citation>
    <scope>NUCLEOTIDE SEQUENCE [LARGE SCALE GENOMIC DNA]</scope>
    <source>
        <strain>NZ131</strain>
    </source>
</reference>
<keyword id="KW-0066">ATP synthesis</keyword>
<keyword id="KW-1003">Cell membrane</keyword>
<keyword id="KW-0138">CF(0)</keyword>
<keyword id="KW-0375">Hydrogen ion transport</keyword>
<keyword id="KW-0406">Ion transport</keyword>
<keyword id="KW-0472">Membrane</keyword>
<keyword id="KW-0812">Transmembrane</keyword>
<keyword id="KW-1133">Transmembrane helix</keyword>
<keyword id="KW-0813">Transport</keyword>
<gene>
    <name evidence="1" type="primary">atpB</name>
    <name type="ordered locus">Spy49_0583</name>
</gene>
<evidence type="ECO:0000255" key="1">
    <source>
        <dbReference type="HAMAP-Rule" id="MF_01393"/>
    </source>
</evidence>
<feature type="chain" id="PRO_1000145338" description="ATP synthase subunit a">
    <location>
        <begin position="1"/>
        <end position="238"/>
    </location>
</feature>
<feature type="transmembrane region" description="Helical" evidence="1">
    <location>
        <begin position="18"/>
        <end position="38"/>
    </location>
</feature>
<feature type="transmembrane region" description="Helical" evidence="1">
    <location>
        <begin position="76"/>
        <end position="96"/>
    </location>
</feature>
<feature type="transmembrane region" description="Helical" evidence="1">
    <location>
        <begin position="114"/>
        <end position="134"/>
    </location>
</feature>
<feature type="transmembrane region" description="Helical" evidence="1">
    <location>
        <begin position="166"/>
        <end position="186"/>
    </location>
</feature>
<feature type="transmembrane region" description="Helical" evidence="1">
    <location>
        <begin position="193"/>
        <end position="213"/>
    </location>
</feature>
<dbReference type="EMBL" id="CP000829">
    <property type="protein sequence ID" value="ACI60908.1"/>
    <property type="molecule type" value="Genomic_DNA"/>
</dbReference>
<dbReference type="SMR" id="B5XKP6"/>
<dbReference type="KEGG" id="soz:Spy49_0583"/>
<dbReference type="HOGENOM" id="CLU_041018_2_3_9"/>
<dbReference type="Proteomes" id="UP000001039">
    <property type="component" value="Chromosome"/>
</dbReference>
<dbReference type="GO" id="GO:0005886">
    <property type="term" value="C:plasma membrane"/>
    <property type="evidence" value="ECO:0007669"/>
    <property type="project" value="UniProtKB-SubCell"/>
</dbReference>
<dbReference type="GO" id="GO:0045259">
    <property type="term" value="C:proton-transporting ATP synthase complex"/>
    <property type="evidence" value="ECO:0007669"/>
    <property type="project" value="UniProtKB-KW"/>
</dbReference>
<dbReference type="GO" id="GO:0046933">
    <property type="term" value="F:proton-transporting ATP synthase activity, rotational mechanism"/>
    <property type="evidence" value="ECO:0007669"/>
    <property type="project" value="UniProtKB-UniRule"/>
</dbReference>
<dbReference type="GO" id="GO:0042777">
    <property type="term" value="P:proton motive force-driven plasma membrane ATP synthesis"/>
    <property type="evidence" value="ECO:0007669"/>
    <property type="project" value="TreeGrafter"/>
</dbReference>
<dbReference type="CDD" id="cd00310">
    <property type="entry name" value="ATP-synt_Fo_a_6"/>
    <property type="match status" value="1"/>
</dbReference>
<dbReference type="Gene3D" id="1.20.120.220">
    <property type="entry name" value="ATP synthase, F0 complex, subunit A"/>
    <property type="match status" value="1"/>
</dbReference>
<dbReference type="HAMAP" id="MF_01393">
    <property type="entry name" value="ATP_synth_a_bact"/>
    <property type="match status" value="1"/>
</dbReference>
<dbReference type="InterPro" id="IPR045082">
    <property type="entry name" value="ATP_syn_F0_a_bact/chloroplast"/>
</dbReference>
<dbReference type="InterPro" id="IPR000568">
    <property type="entry name" value="ATP_synth_F0_asu"/>
</dbReference>
<dbReference type="InterPro" id="IPR023011">
    <property type="entry name" value="ATP_synth_F0_asu_AS"/>
</dbReference>
<dbReference type="InterPro" id="IPR035908">
    <property type="entry name" value="F0_ATP_A_sf"/>
</dbReference>
<dbReference type="NCBIfam" id="TIGR01131">
    <property type="entry name" value="ATP_synt_6_or_A"/>
    <property type="match status" value="1"/>
</dbReference>
<dbReference type="NCBIfam" id="NF004479">
    <property type="entry name" value="PRK05815.1-4"/>
    <property type="match status" value="1"/>
</dbReference>
<dbReference type="PANTHER" id="PTHR42823">
    <property type="entry name" value="ATP SYNTHASE SUBUNIT A, CHLOROPLASTIC"/>
    <property type="match status" value="1"/>
</dbReference>
<dbReference type="PANTHER" id="PTHR42823:SF3">
    <property type="entry name" value="ATP SYNTHASE SUBUNIT A, CHLOROPLASTIC"/>
    <property type="match status" value="1"/>
</dbReference>
<dbReference type="Pfam" id="PF00119">
    <property type="entry name" value="ATP-synt_A"/>
    <property type="match status" value="1"/>
</dbReference>
<dbReference type="PRINTS" id="PR00123">
    <property type="entry name" value="ATPASEA"/>
</dbReference>
<dbReference type="SUPFAM" id="SSF81336">
    <property type="entry name" value="F1F0 ATP synthase subunit A"/>
    <property type="match status" value="1"/>
</dbReference>
<dbReference type="PROSITE" id="PS00449">
    <property type="entry name" value="ATPASE_A"/>
    <property type="match status" value="1"/>
</dbReference>
<comment type="function">
    <text evidence="1">Key component of the proton channel; it plays a direct role in the translocation of protons across the membrane.</text>
</comment>
<comment type="subunit">
    <text evidence="1">F-type ATPases have 2 components, CF(1) - the catalytic core - and CF(0) - the membrane proton channel. CF(1) has five subunits: alpha(3), beta(3), gamma(1), delta(1), epsilon(1). CF(0) has three main subunits: a(1), b(2) and c(9-12). The alpha and beta chains form an alternating ring which encloses part of the gamma chain. CF(1) is attached to CF(0) by a central stalk formed by the gamma and epsilon chains, while a peripheral stalk is formed by the delta and b chains.</text>
</comment>
<comment type="subcellular location">
    <subcellularLocation>
        <location evidence="1">Cell membrane</location>
        <topology evidence="1">Multi-pass membrane protein</topology>
    </subcellularLocation>
</comment>
<comment type="similarity">
    <text evidence="1">Belongs to the ATPase A chain family.</text>
</comment>
<accession>B5XKP6</accession>
<name>ATP6_STRPZ</name>
<protein>
    <recommendedName>
        <fullName evidence="1">ATP synthase subunit a</fullName>
    </recommendedName>
    <alternativeName>
        <fullName evidence="1">ATP synthase F0 sector subunit a</fullName>
    </alternativeName>
    <alternativeName>
        <fullName evidence="1">F-ATPase subunit 6</fullName>
    </alternativeName>
</protein>
<proteinExistence type="inferred from homology"/>
<organism>
    <name type="scientific">Streptococcus pyogenes serotype M49 (strain NZ131)</name>
    <dbReference type="NCBI Taxonomy" id="471876"/>
    <lineage>
        <taxon>Bacteria</taxon>
        <taxon>Bacillati</taxon>
        <taxon>Bacillota</taxon>
        <taxon>Bacilli</taxon>
        <taxon>Lactobacillales</taxon>
        <taxon>Streptococcaceae</taxon>
        <taxon>Streptococcus</taxon>
    </lineage>
</organism>
<sequence length="238" mass="26924">MEEAKIPMLKLGPITFNLTLLAVCIVTIAVIFAFVFWASRQMKLKPEGKQTALEYLISFVDGIGEEHLDHNLQKSYSLLLFTIFLFVAVANNLGLFTKLETVNGYNLWTSPTANLAFDLALSLFITLMVHIEGVRRRGLVAHLKRLATPWPMTPMNLLEEFTNFLSLAIRLFGNIFAGEVVTGLIVQLANYRVYWWPIAFLVNMAWTAFSVFISCIQAFVFTKLTATYLGKKVNESEE</sequence>